<comment type="function">
    <text evidence="1">Acts as a radical domain for damaged PFL and possibly other radical proteins.</text>
</comment>
<sequence>MIKGIQITQAANDNLLNSFWLLDSEKGEARCLAAKAEFVEDQIVAVSELGQIEYRELPVDVAPTIKVEGGQHLNVNVLRRETLEDAVNNPEKYPQLTIRVSGYAVRFNSLTPEQQRDVITRTFTQSL</sequence>
<feature type="chain" id="PRO_1000083726" description="Autonomous glycyl radical cofactor">
    <location>
        <begin position="1"/>
        <end position="127"/>
    </location>
</feature>
<feature type="domain" description="Glycine radical" evidence="1">
    <location>
        <begin position="5"/>
        <end position="127"/>
    </location>
</feature>
<feature type="modified residue" description="Glycine radical" evidence="1">
    <location>
        <position position="102"/>
    </location>
</feature>
<organism>
    <name type="scientific">Histophilus somni (strain 129Pt)</name>
    <name type="common">Haemophilus somnus</name>
    <dbReference type="NCBI Taxonomy" id="205914"/>
    <lineage>
        <taxon>Bacteria</taxon>
        <taxon>Pseudomonadati</taxon>
        <taxon>Pseudomonadota</taxon>
        <taxon>Gammaproteobacteria</taxon>
        <taxon>Pasteurellales</taxon>
        <taxon>Pasteurellaceae</taxon>
        <taxon>Histophilus</taxon>
    </lineage>
</organism>
<proteinExistence type="inferred from homology"/>
<name>GRCA_HISS1</name>
<keyword id="KW-0556">Organic radical</keyword>
<protein>
    <recommendedName>
        <fullName evidence="1">Autonomous glycyl radical cofactor</fullName>
    </recommendedName>
</protein>
<accession>Q0I272</accession>
<dbReference type="EMBL" id="CP000436">
    <property type="protein sequence ID" value="ABI24757.1"/>
    <property type="molecule type" value="Genomic_DNA"/>
</dbReference>
<dbReference type="SMR" id="Q0I272"/>
<dbReference type="KEGG" id="hso:HS_0480"/>
<dbReference type="eggNOG" id="COG3445">
    <property type="taxonomic scope" value="Bacteria"/>
</dbReference>
<dbReference type="HOGENOM" id="CLU_133780_0_0_6"/>
<dbReference type="GO" id="GO:0005829">
    <property type="term" value="C:cytosol"/>
    <property type="evidence" value="ECO:0007669"/>
    <property type="project" value="TreeGrafter"/>
</dbReference>
<dbReference type="GO" id="GO:0008861">
    <property type="term" value="F:formate C-acetyltransferase activity"/>
    <property type="evidence" value="ECO:0007669"/>
    <property type="project" value="TreeGrafter"/>
</dbReference>
<dbReference type="FunFam" id="3.20.70.20:FF:000002">
    <property type="entry name" value="Autonomous glycyl radical cofactor"/>
    <property type="match status" value="1"/>
</dbReference>
<dbReference type="Gene3D" id="3.20.70.20">
    <property type="match status" value="1"/>
</dbReference>
<dbReference type="HAMAP" id="MF_00806">
    <property type="entry name" value="GrcA"/>
    <property type="match status" value="1"/>
</dbReference>
<dbReference type="InterPro" id="IPR050244">
    <property type="entry name" value="Auton_GlycylRad_Cofactor"/>
</dbReference>
<dbReference type="InterPro" id="IPR019777">
    <property type="entry name" value="Form_AcTrfase_GR_CS"/>
</dbReference>
<dbReference type="InterPro" id="IPR001150">
    <property type="entry name" value="Gly_radical"/>
</dbReference>
<dbReference type="InterPro" id="IPR011140">
    <property type="entry name" value="Glycyl_radical_cofactor_GrcA"/>
</dbReference>
<dbReference type="NCBIfam" id="TIGR04365">
    <property type="entry name" value="spare_glycyl"/>
    <property type="match status" value="1"/>
</dbReference>
<dbReference type="PANTHER" id="PTHR30191">
    <property type="entry name" value="FORMATE ACETYLTRANSFERASE"/>
    <property type="match status" value="1"/>
</dbReference>
<dbReference type="PANTHER" id="PTHR30191:SF0">
    <property type="entry name" value="FORMATE ACETYLTRANSFERASE 1"/>
    <property type="match status" value="1"/>
</dbReference>
<dbReference type="Pfam" id="PF01228">
    <property type="entry name" value="Gly_radical"/>
    <property type="match status" value="1"/>
</dbReference>
<dbReference type="PIRSF" id="PIRSF000378">
    <property type="entry name" value="Gly_radicl_yfiD"/>
    <property type="match status" value="1"/>
</dbReference>
<dbReference type="SUPFAM" id="SSF51998">
    <property type="entry name" value="PFL-like glycyl radical enzymes"/>
    <property type="match status" value="1"/>
</dbReference>
<dbReference type="PROSITE" id="PS00850">
    <property type="entry name" value="GLY_RADICAL_1"/>
    <property type="match status" value="1"/>
</dbReference>
<dbReference type="PROSITE" id="PS51149">
    <property type="entry name" value="GLY_RADICAL_2"/>
    <property type="match status" value="1"/>
</dbReference>
<evidence type="ECO:0000255" key="1">
    <source>
        <dbReference type="HAMAP-Rule" id="MF_00806"/>
    </source>
</evidence>
<reference key="1">
    <citation type="journal article" date="2007" name="J. Bacteriol.">
        <title>Complete genome sequence of Haemophilus somnus (Histophilus somni) strain 129Pt and comparison to Haemophilus ducreyi 35000HP and Haemophilus influenzae Rd.</title>
        <authorList>
            <person name="Challacombe J.F."/>
            <person name="Duncan A.J."/>
            <person name="Brettin T.S."/>
            <person name="Bruce D."/>
            <person name="Chertkov O."/>
            <person name="Detter J.C."/>
            <person name="Han C.S."/>
            <person name="Misra M."/>
            <person name="Richardson P."/>
            <person name="Tapia R."/>
            <person name="Thayer N."/>
            <person name="Xie G."/>
            <person name="Inzana T.J."/>
        </authorList>
    </citation>
    <scope>NUCLEOTIDE SEQUENCE [LARGE SCALE GENOMIC DNA]</scope>
    <source>
        <strain>129Pt</strain>
    </source>
</reference>
<gene>
    <name evidence="1" type="primary">grcA</name>
    <name type="ordered locus">HS_0480</name>
</gene>